<feature type="chain" id="PRO_0000094027" description="Stomatin">
    <location>
        <begin position="1"/>
        <end position="288"/>
    </location>
</feature>
<feature type="topological domain" description="Cytoplasmic" evidence="2">
    <location>
        <begin position="1"/>
        <end position="25"/>
    </location>
</feature>
<feature type="intramembrane region" evidence="2">
    <location>
        <begin position="26"/>
        <end position="54"/>
    </location>
</feature>
<feature type="topological domain" description="Cytoplasmic" evidence="2">
    <location>
        <begin position="55"/>
        <end position="288"/>
    </location>
</feature>
<feature type="region of interest" description="Disordered" evidence="3">
    <location>
        <begin position="1"/>
        <end position="22"/>
    </location>
</feature>
<feature type="region of interest" description="Required for homooligomerization">
    <location>
        <begin position="265"/>
        <end position="273"/>
    </location>
</feature>
<feature type="region of interest" description="Required for lipid raft association">
    <location>
        <begin position="267"/>
        <end position="269"/>
    </location>
</feature>
<feature type="region of interest" description="Interaction with LANCL1" evidence="15">
    <location>
        <begin position="273"/>
        <end position="287"/>
    </location>
</feature>
<feature type="modified residue" description="Phosphoserine; by PKA" evidence="13 23">
    <location>
        <position position="10"/>
    </location>
</feature>
<feature type="modified residue" description="Phosphoserine" evidence="23">
    <location>
        <position position="18"/>
    </location>
</feature>
<feature type="modified residue" description="Phosphoserine" evidence="1">
    <location>
        <position position="161"/>
    </location>
</feature>
<feature type="modified residue" description="Phosphoserine" evidence="22 24">
    <location>
        <position position="244"/>
    </location>
</feature>
<feature type="lipid moiety-binding region" description="S-palmitoyl cysteine" evidence="4">
    <location>
        <position position="30"/>
    </location>
</feature>
<feature type="lipid moiety-binding region" description="S-palmitoyl cysteine; partial" evidence="4">
    <location>
        <position position="87"/>
    </location>
</feature>
<feature type="splice variant" id="VSP_044669" description="In isoform 2." evidence="17">
    <location>
        <begin position="55"/>
        <end position="219"/>
    </location>
</feature>
<feature type="mutagenesis site" description="No effect on oligomerization." evidence="8">
    <original>T</original>
    <variation>A</variation>
    <location>
        <position position="182"/>
    </location>
</feature>
<feature type="mutagenesis site" description="Complete loss of oligomerization." evidence="8">
    <original>W</original>
    <variation>A</variation>
    <location>
        <position position="185"/>
    </location>
</feature>
<feature type="mutagenesis site" description="Complete loss of oligomerization." evidence="8">
    <original>Y</original>
    <variation>A</variation>
    <location>
        <position position="252"/>
    </location>
</feature>
<feature type="mutagenesis site" description="Reduced oligomerization and lipid raft association.">
    <original>K</original>
    <variation>A</variation>
    <location>
        <position position="263"/>
    </location>
</feature>
<feature type="mutagenesis site" description="Reduced oligomerization and lipid raft association.">
    <original>N</original>
    <variation>A</variation>
    <location>
        <position position="264"/>
    </location>
</feature>
<feature type="mutagenesis site" description="Oligomerization reduced to 18%. Reduced lipid raft association.">
    <original>S</original>
    <variation>A</variation>
    <location>
        <position position="265"/>
    </location>
</feature>
<feature type="mutagenesis site" description="Complete loss of oligomerization. Reduced lipid raft association.">
    <original>T</original>
    <variation>A</variation>
    <location>
        <position position="266"/>
    </location>
</feature>
<feature type="mutagenesis site" description="Complete loss of oligomerization and lipid raft association.">
    <original>I</original>
    <variation>A</variation>
    <location>
        <position position="267"/>
    </location>
</feature>
<feature type="mutagenesis site" description="Complete loss of oligomerization and lipid raft association.">
    <original>V</original>
    <variation>A</variation>
    <location>
        <position position="268"/>
    </location>
</feature>
<feature type="mutagenesis site" description="Complete loss of oligomerization and lipid raft association.">
    <original>F</original>
    <variation>A</variation>
    <location>
        <position position="269"/>
    </location>
</feature>
<feature type="mutagenesis site" description="Complete loss of oligomerization. No effect on lipid raft association.">
    <original>P</original>
    <variation>A</variation>
    <location>
        <position position="270"/>
    </location>
</feature>
<feature type="mutagenesis site" description="Complete loss of oligomerization. Reduced lipid raft association.">
    <original>L</original>
    <variation>A</variation>
    <location>
        <position position="271"/>
    </location>
</feature>
<feature type="mutagenesis site" description="Oligomerization reduced to 18%. Reduced lipid raft association.">
    <original>P</original>
    <variation>A</variation>
    <location>
        <position position="272"/>
    </location>
</feature>
<feature type="mutagenesis site" description="Complete loss of oligomerization. Reduced lipid raft association.">
    <original>I</original>
    <variation>A</variation>
    <location>
        <position position="273"/>
    </location>
</feature>
<feature type="mutagenesis site" description="Reduced oligomerization and lipid raft association.">
    <original>D</original>
    <variation>A</variation>
    <location>
        <position position="274"/>
    </location>
</feature>
<feature type="mutagenesis site" description="Reduced oligomerization and lipid raft association.">
    <original>M</original>
    <variation>A</variation>
    <location>
        <position position="275"/>
    </location>
</feature>
<feature type="mutagenesis site" description="Reduced oligomerization and lipid raft association.">
    <original>L</original>
    <variation>A</variation>
    <location>
        <position position="276"/>
    </location>
</feature>
<feature type="sequence conflict" description="In Ref. 3; AAA58432." evidence="20" ref="3">
    <original>H</original>
    <variation>D</variation>
    <location>
        <position position="6"/>
    </location>
</feature>
<feature type="sequence conflict" description="In Ref. 7; AAH10703." evidence="20" ref="7">
    <original>S</original>
    <variation>Y</variation>
    <location>
        <position position="244"/>
    </location>
</feature>
<feature type="strand" evidence="25">
    <location>
        <begin position="99"/>
        <end position="109"/>
    </location>
</feature>
<feature type="strand" evidence="25">
    <location>
        <begin position="115"/>
        <end position="127"/>
    </location>
</feature>
<feature type="helix" evidence="25">
    <location>
        <begin position="129"/>
        <end position="134"/>
    </location>
</feature>
<feature type="helix" evidence="25">
    <location>
        <begin position="136"/>
        <end position="156"/>
    </location>
</feature>
<feature type="helix" evidence="25">
    <location>
        <begin position="160"/>
        <end position="163"/>
    </location>
</feature>
<feature type="helix" evidence="25">
    <location>
        <begin position="167"/>
        <end position="183"/>
    </location>
</feature>
<feature type="turn" evidence="25">
    <location>
        <begin position="184"/>
        <end position="186"/>
    </location>
</feature>
<feature type="strand" evidence="25">
    <location>
        <begin position="187"/>
        <end position="197"/>
    </location>
</feature>
<reference key="1">
    <citation type="journal article" date="1991" name="Biochim. Biophys. Acta">
        <title>Cloning and nucleotide sequence of cDNA encoding human erythrocyte band 7 integral membrane protein.</title>
        <authorList>
            <person name="Hiebl-Dirschmied C.M."/>
            <person name="Entler B."/>
            <person name="Glotzmann C."/>
            <person name="Maurer-Fogy I."/>
            <person name="Stratowa C."/>
            <person name="Prohaska R."/>
        </authorList>
    </citation>
    <scope>NUCLEOTIDE SEQUENCE [MRNA] (ISOFORM 1)</scope>
    <scope>PARTIAL PROTEIN SEQUENCE</scope>
</reference>
<reference key="2">
    <citation type="journal article" date="1992" name="Blood">
        <title>Isolation of cDNA coding for an ubiquitous membrane protein deficient in high Na+, low K+ stomatocytic erythrocytes.</title>
        <authorList>
            <person name="Stewart G.W."/>
            <person name="Hepworth-Jones B.E."/>
            <person name="Keen J.N."/>
            <person name="Dash B.C.J."/>
            <person name="Argent A.C."/>
            <person name="Casimir C.M."/>
        </authorList>
    </citation>
    <scope>NUCLEOTIDE SEQUENCE [MRNA] (ISOFORM 1)</scope>
    <scope>PROTEIN SEQUENCE OF 187-232</scope>
    <scope>TISSUE SPECIFICITY</scope>
    <source>
        <tissue>Bone marrow</tissue>
    </source>
</reference>
<reference key="3">
    <citation type="journal article" date="1995" name="Genomics">
        <title>The organization of the gene (EPB72) encoding the human erythrocyte band 7 integral membrane protein (protein 7.2b).</title>
        <authorList>
            <person name="Unfried I."/>
            <person name="Entler B."/>
            <person name="Prohaska R."/>
        </authorList>
    </citation>
    <scope>NUCLEOTIDE SEQUENCE [GENOMIC DNA]</scope>
</reference>
<reference key="4">
    <citation type="journal article" date="1995" name="J. Biol. Chem.">
        <title>Structure, organization, and expression of the human band 7.2b gene, a candidate gene for hereditary hydrocytosis.</title>
        <authorList>
            <person name="Gallagher P.G."/>
            <person name="Forget B.G."/>
        </authorList>
    </citation>
    <scope>NUCLEOTIDE SEQUENCE [GENOMIC DNA]</scope>
</reference>
<reference key="5">
    <citation type="submission" date="2004-06" db="EMBL/GenBank/DDBJ databases">
        <title>Cloning of human full open reading frames in Gateway(TM) system entry vector (pDONR201).</title>
        <authorList>
            <person name="Halleck A."/>
            <person name="Ebert L."/>
            <person name="Mkoundinya M."/>
            <person name="Schick M."/>
            <person name="Eisenstein S."/>
            <person name="Neubert P."/>
            <person name="Kstrang K."/>
            <person name="Schatten R."/>
            <person name="Shen B."/>
            <person name="Henze S."/>
            <person name="Mar W."/>
            <person name="Korn B."/>
            <person name="Zuo D."/>
            <person name="Hu Y."/>
            <person name="LaBaer J."/>
        </authorList>
    </citation>
    <scope>NUCLEOTIDE SEQUENCE [LARGE SCALE MRNA] (ISOFORM 1)</scope>
</reference>
<reference key="6">
    <citation type="journal article" date="2004" name="Nature">
        <title>DNA sequence and analysis of human chromosome 9.</title>
        <authorList>
            <person name="Humphray S.J."/>
            <person name="Oliver K."/>
            <person name="Hunt A.R."/>
            <person name="Plumb R.W."/>
            <person name="Loveland J.E."/>
            <person name="Howe K.L."/>
            <person name="Andrews T.D."/>
            <person name="Searle S."/>
            <person name="Hunt S.E."/>
            <person name="Scott C.E."/>
            <person name="Jones M.C."/>
            <person name="Ainscough R."/>
            <person name="Almeida J.P."/>
            <person name="Ambrose K.D."/>
            <person name="Ashwell R.I.S."/>
            <person name="Babbage A.K."/>
            <person name="Babbage S."/>
            <person name="Bagguley C.L."/>
            <person name="Bailey J."/>
            <person name="Banerjee R."/>
            <person name="Barker D.J."/>
            <person name="Barlow K.F."/>
            <person name="Bates K."/>
            <person name="Beasley H."/>
            <person name="Beasley O."/>
            <person name="Bird C.P."/>
            <person name="Bray-Allen S."/>
            <person name="Brown A.J."/>
            <person name="Brown J.Y."/>
            <person name="Burford D."/>
            <person name="Burrill W."/>
            <person name="Burton J."/>
            <person name="Carder C."/>
            <person name="Carter N.P."/>
            <person name="Chapman J.C."/>
            <person name="Chen Y."/>
            <person name="Clarke G."/>
            <person name="Clark S.Y."/>
            <person name="Clee C.M."/>
            <person name="Clegg S."/>
            <person name="Collier R.E."/>
            <person name="Corby N."/>
            <person name="Crosier M."/>
            <person name="Cummings A.T."/>
            <person name="Davies J."/>
            <person name="Dhami P."/>
            <person name="Dunn M."/>
            <person name="Dutta I."/>
            <person name="Dyer L.W."/>
            <person name="Earthrowl M.E."/>
            <person name="Faulkner L."/>
            <person name="Fleming C.J."/>
            <person name="Frankish A."/>
            <person name="Frankland J.A."/>
            <person name="French L."/>
            <person name="Fricker D.G."/>
            <person name="Garner P."/>
            <person name="Garnett J."/>
            <person name="Ghori J."/>
            <person name="Gilbert J.G.R."/>
            <person name="Glison C."/>
            <person name="Grafham D.V."/>
            <person name="Gribble S."/>
            <person name="Griffiths C."/>
            <person name="Griffiths-Jones S."/>
            <person name="Grocock R."/>
            <person name="Guy J."/>
            <person name="Hall R.E."/>
            <person name="Hammond S."/>
            <person name="Harley J.L."/>
            <person name="Harrison E.S.I."/>
            <person name="Hart E.A."/>
            <person name="Heath P.D."/>
            <person name="Henderson C.D."/>
            <person name="Hopkins B.L."/>
            <person name="Howard P.J."/>
            <person name="Howden P.J."/>
            <person name="Huckle E."/>
            <person name="Johnson C."/>
            <person name="Johnson D."/>
            <person name="Joy A.A."/>
            <person name="Kay M."/>
            <person name="Keenan S."/>
            <person name="Kershaw J.K."/>
            <person name="Kimberley A.M."/>
            <person name="King A."/>
            <person name="Knights A."/>
            <person name="Laird G.K."/>
            <person name="Langford C."/>
            <person name="Lawlor S."/>
            <person name="Leongamornlert D.A."/>
            <person name="Leversha M."/>
            <person name="Lloyd C."/>
            <person name="Lloyd D.M."/>
            <person name="Lovell J."/>
            <person name="Martin S."/>
            <person name="Mashreghi-Mohammadi M."/>
            <person name="Matthews L."/>
            <person name="McLaren S."/>
            <person name="McLay K.E."/>
            <person name="McMurray A."/>
            <person name="Milne S."/>
            <person name="Nickerson T."/>
            <person name="Nisbett J."/>
            <person name="Nordsiek G."/>
            <person name="Pearce A.V."/>
            <person name="Peck A.I."/>
            <person name="Porter K.M."/>
            <person name="Pandian R."/>
            <person name="Pelan S."/>
            <person name="Phillimore B."/>
            <person name="Povey S."/>
            <person name="Ramsey Y."/>
            <person name="Rand V."/>
            <person name="Scharfe M."/>
            <person name="Sehra H.K."/>
            <person name="Shownkeen R."/>
            <person name="Sims S.K."/>
            <person name="Skuce C.D."/>
            <person name="Smith M."/>
            <person name="Steward C.A."/>
            <person name="Swarbreck D."/>
            <person name="Sycamore N."/>
            <person name="Tester J."/>
            <person name="Thorpe A."/>
            <person name="Tracey A."/>
            <person name="Tromans A."/>
            <person name="Thomas D.W."/>
            <person name="Wall M."/>
            <person name="Wallis J.M."/>
            <person name="West A.P."/>
            <person name="Whitehead S.L."/>
            <person name="Willey D.L."/>
            <person name="Williams S.A."/>
            <person name="Wilming L."/>
            <person name="Wray P.W."/>
            <person name="Young L."/>
            <person name="Ashurst J.L."/>
            <person name="Coulson A."/>
            <person name="Blocker H."/>
            <person name="Durbin R.M."/>
            <person name="Sulston J.E."/>
            <person name="Hubbard T."/>
            <person name="Jackson M.J."/>
            <person name="Bentley D.R."/>
            <person name="Beck S."/>
            <person name="Rogers J."/>
            <person name="Dunham I."/>
        </authorList>
    </citation>
    <scope>NUCLEOTIDE SEQUENCE [LARGE SCALE GENOMIC DNA]</scope>
</reference>
<reference key="7">
    <citation type="journal article" date="2004" name="Genome Res.">
        <title>The status, quality, and expansion of the NIH full-length cDNA project: the Mammalian Gene Collection (MGC).</title>
        <authorList>
            <consortium name="The MGC Project Team"/>
        </authorList>
    </citation>
    <scope>NUCLEOTIDE SEQUENCE [LARGE SCALE MRNA] (ISOFORMS 1 AND 2)</scope>
    <source>
        <tissue>Eye</tissue>
        <tissue>Hypothalamus</tissue>
    </source>
</reference>
<reference key="8">
    <citation type="journal article" date="1993" name="Biochim. Biophys. Acta">
        <title>Identification of the phosphorylation site on human erythrocyte band 7 integral membrane protein: implications for a monotopic protein structure.</title>
        <authorList>
            <person name="Salzer U."/>
            <person name="Ahorn H."/>
            <person name="Prohaska R."/>
        </authorList>
    </citation>
    <scope>PROTEIN SEQUENCE OF 5-25</scope>
    <scope>PHOSPHORYLATION AT SER-10</scope>
</reference>
<reference key="9">
    <citation type="journal article" date="1997" name="Eur. J. Cell Biol.">
        <title>Colocalization of stomatin (band 7.2b) and actin microfilaments in UAC epithelial cells.</title>
        <authorList>
            <person name="Snyers L."/>
            <person name="Thines-Sempoux D."/>
            <person name="Prohaska R."/>
        </authorList>
    </citation>
    <scope>SUBCELLULAR LOCATION</scope>
</reference>
<reference key="10">
    <citation type="journal article" date="1998" name="Biochim. Biophys. Acta">
        <title>Isolation, molecular characterization, and tissue-specific expression of a novel putative G protein-coupled receptor.</title>
        <authorList>
            <person name="Mayer H."/>
            <person name="Salzer U."/>
            <person name="Breuss J."/>
            <person name="Ziegler S."/>
            <person name="Marchler-Bauer A."/>
            <person name="Prohaska R."/>
        </authorList>
    </citation>
    <scope>INTERACTION WITH LANCL1</scope>
    <source>
        <tissue>Bone marrow</tissue>
        <tissue>Erythrocyte</tissue>
        <tissue>Fetal brain</tissue>
    </source>
</reference>
<reference key="11">
    <citation type="journal article" date="1998" name="J. Biol. Chem.">
        <title>Oligomeric nature of the integral membrane protein stomatin.</title>
        <authorList>
            <person name="Snyers L."/>
            <person name="Umlauf E."/>
            <person name="Prohaska R."/>
        </authorList>
    </citation>
    <scope>SUBUNIT</scope>
</reference>
<reference key="12">
    <citation type="journal article" date="1999" name="FEBS Lett.">
        <title>Cysteine 29 is the major palmitoylation site on stomatin.</title>
        <authorList>
            <person name="Snyers L."/>
            <person name="Umlauf E."/>
            <person name="Prohaska R."/>
        </authorList>
    </citation>
    <scope>PALMITOYLATION AT CYS-30 AND CYS-87</scope>
</reference>
<reference key="13">
    <citation type="journal article" date="2002" name="Blood">
        <title>Stomatin is a major lipid-raft component of platelet alpha granules.</title>
        <authorList>
            <person name="Mairhofer M."/>
            <person name="Steiner M."/>
            <person name="Mosgoeller W."/>
            <person name="Prohaska R."/>
            <person name="Salzer U."/>
        </authorList>
    </citation>
    <scope>SUBCELLULAR LOCATION</scope>
</reference>
<reference key="14">
    <citation type="journal article" date="2003" name="J. Proteome Res.">
        <title>Proteomic analysis of early melanosomes: identification of novel melanosomal proteins.</title>
        <authorList>
            <person name="Basrur V."/>
            <person name="Yang F."/>
            <person name="Kushimoto T."/>
            <person name="Higashimoto Y."/>
            <person name="Yasumoto K."/>
            <person name="Valencia J."/>
            <person name="Muller J."/>
            <person name="Vieira W.D."/>
            <person name="Watabe H."/>
            <person name="Shabanowitz J."/>
            <person name="Hearing V.J."/>
            <person name="Hunt D.F."/>
            <person name="Appella E."/>
        </authorList>
    </citation>
    <scope>SUBCELLULAR LOCATION [LARGE SCALE ANALYSIS]</scope>
    <source>
        <tissue>Melanoma</tissue>
    </source>
</reference>
<reference key="15">
    <citation type="journal article" date="2006" name="J. Biol. Chem.">
        <title>Characterization of the stomatin domain involved in homo-oligomerization and lipid raft association.</title>
        <authorList>
            <person name="Umlauf E."/>
            <person name="Mairhofer M."/>
            <person name="Prohaska R."/>
        </authorList>
    </citation>
    <scope>MUTAGENESIS OF THR-182; TRP-185; TYR-252 AND 263-LYS--LEU-276</scope>
</reference>
<reference key="16">
    <citation type="journal article" date="2006" name="J. Proteome Res.">
        <title>Proteomic and bioinformatic characterization of the biogenesis and function of melanosomes.</title>
        <authorList>
            <person name="Chi A."/>
            <person name="Valencia J.C."/>
            <person name="Hu Z.-Z."/>
            <person name="Watabe H."/>
            <person name="Yamaguchi H."/>
            <person name="Mangini N.J."/>
            <person name="Huang H."/>
            <person name="Canfield V.A."/>
            <person name="Cheng K.C."/>
            <person name="Yang F."/>
            <person name="Abe R."/>
            <person name="Yamagishi S."/>
            <person name="Shabanowitz J."/>
            <person name="Hearing V.J."/>
            <person name="Wu C."/>
            <person name="Appella E."/>
            <person name="Hunt D.F."/>
        </authorList>
    </citation>
    <scope>SUBCELLULAR LOCATION [LARGE SCALE ANALYSIS]</scope>
    <source>
        <tissue>Melanoma</tissue>
    </source>
</reference>
<reference key="17">
    <citation type="journal article" date="2008" name="Proc. Natl. Acad. Sci. U.S.A.">
        <title>A quantitative atlas of mitotic phosphorylation.</title>
        <authorList>
            <person name="Dephoure N."/>
            <person name="Zhou C."/>
            <person name="Villen J."/>
            <person name="Beausoleil S.A."/>
            <person name="Bakalarski C.E."/>
            <person name="Elledge S.J."/>
            <person name="Gygi S.P."/>
        </authorList>
    </citation>
    <scope>PHOSPHORYLATION [LARGE SCALE ANALYSIS] AT SER-244</scope>
    <scope>IDENTIFICATION BY MASS SPECTROMETRY [LARGE SCALE ANALYSIS]</scope>
    <source>
        <tissue>Cervix carcinoma</tissue>
    </source>
</reference>
<reference key="18">
    <citation type="journal article" date="2009" name="J. Biol. Chem.">
        <title>Stomatin-like protein-1 interacts with stomatin and is targeted to late endosomes.</title>
        <authorList>
            <person name="Mairhofer M."/>
            <person name="Steiner M."/>
            <person name="Salzer U."/>
            <person name="Prohaska R."/>
        </authorList>
    </citation>
    <scope>INTERACTION WITH STOML1</scope>
</reference>
<reference key="19">
    <citation type="journal article" date="2011" name="BMC Syst. Biol.">
        <title>Initial characterization of the human central proteome.</title>
        <authorList>
            <person name="Burkard T.R."/>
            <person name="Planyavsky M."/>
            <person name="Kaupe I."/>
            <person name="Breitwieser F.P."/>
            <person name="Buerckstuemmer T."/>
            <person name="Bennett K.L."/>
            <person name="Superti-Furga G."/>
            <person name="Colinge J."/>
        </authorList>
    </citation>
    <scope>IDENTIFICATION BY MASS SPECTROMETRY [LARGE SCALE ANALYSIS]</scope>
</reference>
<reference key="20">
    <citation type="journal article" date="2013" name="Biochim. Biophys. Acta">
        <title>Stomatin interacts with GLUT1/SLC2A1, band 3/SLC4A1, and aquaporin-1 in human erythrocyte membrane domains.</title>
        <authorList>
            <person name="Rungaldier S."/>
            <person name="Oberwagner W."/>
            <person name="Salzer U."/>
            <person name="Csaszar E."/>
            <person name="Prohaska R."/>
        </authorList>
    </citation>
    <scope>SUBCELLULAR LOCATION</scope>
    <scope>TISSUE SPECIFICITY</scope>
    <scope>INTERACTION WITH SLC2A1 AND SLC4A1</scope>
    <scope>SUBUNIT</scope>
</reference>
<reference key="21">
    <citation type="journal article" date="2013" name="J. Proteome Res.">
        <title>Toward a comprehensive characterization of a human cancer cell phosphoproteome.</title>
        <authorList>
            <person name="Zhou H."/>
            <person name="Di Palma S."/>
            <person name="Preisinger C."/>
            <person name="Peng M."/>
            <person name="Polat A.N."/>
            <person name="Heck A.J."/>
            <person name="Mohammed S."/>
        </authorList>
    </citation>
    <scope>PHOSPHORYLATION [LARGE SCALE ANALYSIS] AT SER-10 AND SER-18</scope>
    <scope>IDENTIFICATION BY MASS SPECTROMETRY [LARGE SCALE ANALYSIS]</scope>
    <source>
        <tissue>Cervix carcinoma</tissue>
    </source>
</reference>
<reference key="22">
    <citation type="journal article" date="2014" name="J. Proteomics">
        <title>An enzyme assisted RP-RPLC approach for in-depth analysis of human liver phosphoproteome.</title>
        <authorList>
            <person name="Bian Y."/>
            <person name="Song C."/>
            <person name="Cheng K."/>
            <person name="Dong M."/>
            <person name="Wang F."/>
            <person name="Huang J."/>
            <person name="Sun D."/>
            <person name="Wang L."/>
            <person name="Ye M."/>
            <person name="Zou H."/>
        </authorList>
    </citation>
    <scope>PHOSPHORYLATION [LARGE SCALE ANALYSIS] AT SER-244</scope>
    <scope>IDENTIFICATION BY MASS SPECTROMETRY [LARGE SCALE ANALYSIS]</scope>
    <source>
        <tissue>Liver</tissue>
    </source>
</reference>
<reference key="23">
    <citation type="journal article" date="2015" name="Proteomics">
        <title>N-terminome analysis of the human mitochondrial proteome.</title>
        <authorList>
            <person name="Vaca Jacome A.S."/>
            <person name="Rabilloud T."/>
            <person name="Schaeffer-Reiss C."/>
            <person name="Rompais M."/>
            <person name="Ayoub D."/>
            <person name="Lane L."/>
            <person name="Bairoch A."/>
            <person name="Van Dorsselaer A."/>
            <person name="Carapito C."/>
        </authorList>
    </citation>
    <scope>IDENTIFICATION BY MASS SPECTROMETRY [LARGE SCALE ANALYSIS]</scope>
</reference>
<reference key="24">
    <citation type="journal article" date="2017" name="Sci. Rep.">
        <title>Stomatin modulates the activity of the Anion Exchanger 1 (AE1, SLC4A1).</title>
        <authorList>
            <person name="Genetet S."/>
            <person name="Desrames A."/>
            <person name="Chouali Y."/>
            <person name="Ripoche P."/>
            <person name="Lopez C."/>
            <person name="Mouro-Chanteloup I."/>
        </authorList>
    </citation>
    <scope>INTERACTION WITH SLC4A1</scope>
</reference>
<proteinExistence type="evidence at protein level"/>
<gene>
    <name evidence="21" type="primary">STOM</name>
    <name evidence="21" type="synonym">BND7</name>
    <name evidence="19" type="synonym">EPB72</name>
</gene>
<sequence length="288" mass="31731">MAEKRHTRDSEAQRLPDSFKDSPSKGLGPCGWILVAFSFLFTVITFPISIWMCIKIIKEYERAIIFRLGRILQGGAKGPGLFFILPCTDSFIKVDMRTISFDIPPQEILTKDSVTISVDGVVYYRVQNATLAVANITNADSATRLLAQTTLRNVLGTKNLSQILSDREEIAHNMQSTLDDATDAWGIKVERVEIKDVKLPVQLQRAMAAEAEASREARAKVIAAEGEMNASRALKEASMVITESPAALQLRYLQTLTTIAAEKNSTIVFPLPIDMLQGIIGAKHSHLG</sequence>
<comment type="function">
    <text>Regulates ion channel activity and transmembrane ion transport. Regulates ASIC2 and ASIC3 channel activity.</text>
</comment>
<comment type="subunit">
    <text evidence="1 10 11 12 15 16">Homodimer and higher order homooligomer (PubMed:9642292). The homodimer is banana-shaped (PubMed:9642292). Interacts with ASIC1, ASIC2 and ASIC3 (By similarity). Interacts with LANCL1 (PubMed:9512664). Interacts with SLC2A1 (PubMed:23219802). Interacts with SLC4A1; this interaction positively regulates SLC4A1 activity (PubMed:23219802, PubMed:28387307). Identified in large complexes with SLC40A1, SLC14A1, SLC29A1 and AQP1 (PubMed:23219802). Interacts with STOML1; may redistribute STOM from the plasma membrane to late endosomes (PubMed:19696025).</text>
</comment>
<comment type="interaction">
    <interactant intactId="EBI-1211440">
        <id>P27105</id>
    </interactant>
    <interactant intactId="EBI-11957045">
        <id>Q9NVV5-2</id>
        <label>AIG1</label>
    </interactant>
    <organismsDiffer>false</organismsDiffer>
    <experiments>3</experiments>
</comment>
<comment type="interaction">
    <interactant intactId="EBI-1211440">
        <id>P27105</id>
    </interactant>
    <interactant intactId="EBI-1171525">
        <id>P02652</id>
        <label>APOA2</label>
    </interactant>
    <organismsDiffer>false</organismsDiffer>
    <experiments>3</experiments>
</comment>
<comment type="interaction">
    <interactant intactId="EBI-1211440">
        <id>P27105</id>
    </interactant>
    <interactant intactId="EBI-1054481">
        <id>P54709</id>
        <label>ATP1B3</label>
    </interactant>
    <organismsDiffer>false</organismsDiffer>
    <experiments>3</experiments>
</comment>
<comment type="interaction">
    <interactant intactId="EBI-1211440">
        <id>P27105</id>
    </interactant>
    <interactant intactId="EBI-3904417">
        <id>Q99437</id>
        <label>ATP6V0B</label>
    </interactant>
    <organismsDiffer>false</organismsDiffer>
    <experiments>3</experiments>
</comment>
<comment type="interaction">
    <interactant intactId="EBI-1211440">
        <id>P27105</id>
    </interactant>
    <interactant intactId="EBI-721179">
        <id>P27449</id>
        <label>ATP6V0C</label>
    </interactant>
    <organismsDiffer>false</organismsDiffer>
    <experiments>3</experiments>
</comment>
<comment type="interaction">
    <interactant intactId="EBI-1211440">
        <id>P27105</id>
    </interactant>
    <interactant intactId="EBI-707714">
        <id>Q92843</id>
        <label>BCL2L2</label>
    </interactant>
    <organismsDiffer>false</organismsDiffer>
    <experiments>3</experiments>
</comment>
<comment type="interaction">
    <interactant intactId="EBI-1211440">
        <id>P27105</id>
    </interactant>
    <interactant intactId="EBI-4402847">
        <id>Q12981</id>
        <label>BNIP1</label>
    </interactant>
    <organismsDiffer>false</organismsDiffer>
    <experiments>3</experiments>
</comment>
<comment type="interaction">
    <interactant intactId="EBI-1211440">
        <id>P27105</id>
    </interactant>
    <interactant intactId="EBI-2835920">
        <id>P06681</id>
        <label>C2</label>
    </interactant>
    <organismsDiffer>false</organismsDiffer>
    <experiments>3</experiments>
</comment>
<comment type="interaction">
    <interactant intactId="EBI-1211440">
        <id>P27105</id>
    </interactant>
    <interactant intactId="EBI-11579371">
        <id>Q9BXR6</id>
        <label>CFHR5</label>
    </interactant>
    <organismsDiffer>false</organismsDiffer>
    <experiments>3</experiments>
</comment>
<comment type="interaction">
    <interactant intactId="EBI-1211440">
        <id>P27105</id>
    </interactant>
    <interactant intactId="EBI-748017">
        <id>O43916</id>
        <label>CHST1</label>
    </interactant>
    <organismsDiffer>false</organismsDiffer>
    <experiments>3</experiments>
</comment>
<comment type="interaction">
    <interactant intactId="EBI-1211440">
        <id>P27105</id>
    </interactant>
    <interactant intactId="EBI-12256978">
        <id>Q8N6F1-2</id>
        <label>CLDN19</label>
    </interactant>
    <organismsDiffer>false</organismsDiffer>
    <experiments>3</experiments>
</comment>
<comment type="interaction">
    <interactant intactId="EBI-1211440">
        <id>P27105</id>
    </interactant>
    <interactant intactId="EBI-12813623">
        <id>A0PK11</id>
        <label>CLRN2</label>
    </interactant>
    <organismsDiffer>false</organismsDiffer>
    <experiments>3</experiments>
</comment>
<comment type="interaction">
    <interactant intactId="EBI-1211440">
        <id>P27105</id>
    </interactant>
    <interactant intactId="EBI-11522780">
        <id>Q96DZ9-2</id>
        <label>CMTM5</label>
    </interactant>
    <organismsDiffer>false</organismsDiffer>
    <experiments>3</experiments>
</comment>
<comment type="interaction">
    <interactant intactId="EBI-1211440">
        <id>P27105</id>
    </interactant>
    <interactant intactId="EBI-12208021">
        <id>Q8TBE1</id>
        <label>CNIH3</label>
    </interactant>
    <organismsDiffer>false</organismsDiffer>
    <experiments>3</experiments>
</comment>
<comment type="interaction">
    <interactant intactId="EBI-1211440">
        <id>P27105</id>
    </interactant>
    <interactant intactId="EBI-12019274">
        <id>Q4LDR2</id>
        <label>CTXN3</label>
    </interactant>
    <organismsDiffer>false</organismsDiffer>
    <experiments>3</experiments>
</comment>
<comment type="interaction">
    <interactant intactId="EBI-1211440">
        <id>P27105</id>
    </interactant>
    <interactant intactId="EBI-1058710">
        <id>O43169</id>
        <label>CYB5B</label>
    </interactant>
    <organismsDiffer>false</organismsDiffer>
    <experiments>3</experiments>
</comment>
<comment type="interaction">
    <interactant intactId="EBI-1211440">
        <id>P27105</id>
    </interactant>
    <interactant intactId="EBI-1046040">
        <id>P00387</id>
        <label>CYB5R3</label>
    </interactant>
    <organismsDiffer>false</organismsDiffer>
    <experiments>4</experiments>
</comment>
<comment type="interaction">
    <interactant intactId="EBI-1211440">
        <id>P27105</id>
    </interactant>
    <interactant intactId="EBI-12808806">
        <id>Q9Y4D2</id>
        <label>DAGLA</label>
    </interactant>
    <organismsDiffer>false</organismsDiffer>
    <experiments>3</experiments>
</comment>
<comment type="interaction">
    <interactant intactId="EBI-1211440">
        <id>P27105</id>
    </interactant>
    <interactant intactId="EBI-739789">
        <id>Q92997</id>
        <label>DVL3</label>
    </interactant>
    <organismsDiffer>false</organismsDiffer>
    <experiments>3</experiments>
</comment>
<comment type="interaction">
    <interactant intactId="EBI-1211440">
        <id>P27105</id>
    </interactant>
    <interactant intactId="EBI-4319440">
        <id>P54849</id>
        <label>EMP1</label>
    </interactant>
    <organismsDiffer>false</organismsDiffer>
    <experiments>3</experiments>
</comment>
<comment type="interaction">
    <interactant intactId="EBI-1211440">
        <id>P27105</id>
    </interactant>
    <interactant intactId="EBI-711490">
        <id>Q9UKR5</id>
        <label>ERG28</label>
    </interactant>
    <organismsDiffer>false</organismsDiffer>
    <experiments>3</experiments>
</comment>
<comment type="interaction">
    <interactant intactId="EBI-1211440">
        <id>P27105</id>
    </interactant>
    <interactant intactId="EBI-12142299">
        <id>Q96IV6</id>
        <label>FAXDC2</label>
    </interactant>
    <organismsDiffer>false</organismsDiffer>
    <experiments>3</experiments>
</comment>
<comment type="interaction">
    <interactant intactId="EBI-1211440">
        <id>P27105</id>
    </interactant>
    <interactant intactId="EBI-714482">
        <id>Q9BWH2</id>
        <label>FUNDC2</label>
    </interactant>
    <organismsDiffer>false</organismsDiffer>
    <experiments>3</experiments>
</comment>
<comment type="interaction">
    <interactant intactId="EBI-1211440">
        <id>P27105</id>
    </interactant>
    <interactant intactId="EBI-11991950">
        <id>Q8WWP7</id>
        <label>GIMAP1</label>
    </interactant>
    <organismsDiffer>false</organismsDiffer>
    <experiments>3</experiments>
</comment>
<comment type="interaction">
    <interactant intactId="EBI-1211440">
        <id>P27105</id>
    </interactant>
    <interactant intactId="EBI-6166686">
        <id>Q96F15</id>
        <label>GIMAP5</label>
    </interactant>
    <organismsDiffer>false</organismsDiffer>
    <experiments>3</experiments>
</comment>
<comment type="interaction">
    <interactant intactId="EBI-1211440">
        <id>P27105</id>
    </interactant>
    <interactant intactId="EBI-10178951">
        <id>O00155</id>
        <label>GPR25</label>
    </interactant>
    <organismsDiffer>false</organismsDiffer>
    <experiments>3</experiments>
</comment>
<comment type="interaction">
    <interactant intactId="EBI-1211440">
        <id>P27105</id>
    </interactant>
    <interactant intactId="EBI-2927498">
        <id>O60883</id>
        <label>GPR37L1</label>
    </interactant>
    <organismsDiffer>false</organismsDiffer>
    <experiments>3</experiments>
</comment>
<comment type="interaction">
    <interactant intactId="EBI-1211440">
        <id>P27105</id>
    </interactant>
    <interactant intactId="EBI-10232876">
        <id>Q14416</id>
        <label>GRM2</label>
    </interactant>
    <organismsDiffer>false</organismsDiffer>
    <experiments>3</experiments>
</comment>
<comment type="interaction">
    <interactant intactId="EBI-1211440">
        <id>P27105</id>
    </interactant>
    <interactant intactId="EBI-712096">
        <id>P30519</id>
        <label>HMOX2</label>
    </interactant>
    <organismsDiffer>false</organismsDiffer>
    <experiments>3</experiments>
</comment>
<comment type="interaction">
    <interactant intactId="EBI-1211440">
        <id>P27105</id>
    </interactant>
    <interactant intactId="EBI-3914675">
        <id>O00180</id>
        <label>KCNK1</label>
    </interactant>
    <organismsDiffer>false</organismsDiffer>
    <experiments>3</experiments>
</comment>
<comment type="interaction">
    <interactant intactId="EBI-1211440">
        <id>P27105</id>
    </interactant>
    <interactant intactId="EBI-12007212">
        <id>Q86UP2-3</id>
        <label>KTN1</label>
    </interactant>
    <organismsDiffer>false</organismsDiffer>
    <experiments>3</experiments>
</comment>
<comment type="interaction">
    <interactant intactId="EBI-1211440">
        <id>P27105</id>
    </interactant>
    <interactant intactId="EBI-12133176">
        <id>Q9UIQ6-2</id>
        <label>LNPEP</label>
    </interactant>
    <organismsDiffer>false</organismsDiffer>
    <experiments>3</experiments>
</comment>
<comment type="interaction">
    <interactant intactId="EBI-1211440">
        <id>P27105</id>
    </interactant>
    <interactant intactId="EBI-12866138">
        <id>A0A0C4DFN3</id>
        <label>MGLL</label>
    </interactant>
    <organismsDiffer>false</organismsDiffer>
    <experiments>3</experiments>
</comment>
<comment type="interaction">
    <interactant intactId="EBI-1211440">
        <id>P27105</id>
    </interactant>
    <interactant intactId="EBI-992788">
        <id>P50281</id>
        <label>MMP14</label>
    </interactant>
    <organismsDiffer>false</organismsDiffer>
    <experiments>3</experiments>
</comment>
<comment type="interaction">
    <interactant intactId="EBI-1211440">
        <id>P27105</id>
    </interactant>
    <interactant intactId="EBI-3919611">
        <id>Q16617</id>
        <label>NKG7</label>
    </interactant>
    <organismsDiffer>false</organismsDiffer>
    <experiments>5</experiments>
</comment>
<comment type="interaction">
    <interactant intactId="EBI-1211440">
        <id>P27105</id>
    </interactant>
    <interactant intactId="EBI-1054848">
        <id>Q9P0S3</id>
        <label>ORMDL1</label>
    </interactant>
    <organismsDiffer>false</organismsDiffer>
    <experiments>3</experiments>
</comment>
<comment type="interaction">
    <interactant intactId="EBI-1211440">
        <id>P27105</id>
    </interactant>
    <interactant intactId="EBI-12213001">
        <id>I3L0A0</id>
        <label>PEDS1-UBE2V1</label>
    </interactant>
    <organismsDiffer>false</organismsDiffer>
    <experiments>3</experiments>
</comment>
<comment type="interaction">
    <interactant intactId="EBI-1211440">
        <id>P27105</id>
    </interactant>
    <interactant intactId="EBI-17513590">
        <id>Q9UBM1-2</id>
        <label>PEMT</label>
    </interactant>
    <organismsDiffer>false</organismsDiffer>
    <experiments>3</experiments>
</comment>
<comment type="interaction">
    <interactant intactId="EBI-1211440">
        <id>P27105</id>
    </interactant>
    <interactant intactId="EBI-12957629">
        <id>P0DJD7</id>
        <label>PGA4</label>
    </interactant>
    <organismsDiffer>false</organismsDiffer>
    <experiments>3</experiments>
</comment>
<comment type="interaction">
    <interactant intactId="EBI-1211440">
        <id>P27105</id>
    </interactant>
    <interactant intactId="EBI-2845982">
        <id>Q01453</id>
        <label>PMP22</label>
    </interactant>
    <organismsDiffer>false</organismsDiffer>
    <experiments>3</experiments>
</comment>
<comment type="interaction">
    <interactant intactId="EBI-1211440">
        <id>P27105</id>
    </interactant>
    <interactant intactId="EBI-14199621">
        <id>Q13635-3</id>
        <label>PTCH1</label>
    </interactant>
    <organismsDiffer>false</organismsDiffer>
    <experiments>3</experiments>
</comment>
<comment type="interaction">
    <interactant intactId="EBI-1211440">
        <id>P27105</id>
    </interactant>
    <interactant intactId="EBI-1052363">
        <id>Q9NS64</id>
        <label>RPRM</label>
    </interactant>
    <organismsDiffer>false</organismsDiffer>
    <experiments>3</experiments>
</comment>
<comment type="interaction">
    <interactant intactId="EBI-1211440">
        <id>P27105</id>
    </interactant>
    <interactant intactId="EBI-10244780">
        <id>Q5QGT7</id>
        <label>RTP2</label>
    </interactant>
    <organismsDiffer>false</organismsDiffer>
    <experiments>3</experiments>
</comment>
<comment type="interaction">
    <interactant intactId="EBI-1211440">
        <id>P27105</id>
    </interactant>
    <interactant intactId="EBI-2684237">
        <id>O00767</id>
        <label>SCD</label>
    </interactant>
    <organismsDiffer>false</organismsDiffer>
    <experiments>3</experiments>
</comment>
<comment type="interaction">
    <interactant intactId="EBI-1211440">
        <id>P27105</id>
    </interactant>
    <interactant intactId="EBI-9679163">
        <id>Q9Y6D0</id>
        <label>SELENOK</label>
    </interactant>
    <organismsDiffer>false</organismsDiffer>
    <experiments>3</experiments>
</comment>
<comment type="interaction">
    <interactant intactId="EBI-1211440">
        <id>P27105</id>
    </interactant>
    <interactant intactId="EBI-749270">
        <id>Q8N6R1</id>
        <label>SERP2</label>
    </interactant>
    <organismsDiffer>false</organismsDiffer>
    <experiments>3</experiments>
</comment>
<comment type="interaction">
    <interactant intactId="EBI-1211440">
        <id>P27105</id>
    </interactant>
    <interactant intactId="EBI-2854842">
        <id>Q8WV19</id>
        <label>SFT2D1</label>
    </interactant>
    <organismsDiffer>false</organismsDiffer>
    <experiments>3</experiments>
</comment>
<comment type="interaction">
    <interactant intactId="EBI-1211440">
        <id>P27105</id>
    </interactant>
    <interactant intactId="EBI-4402330">
        <id>O95562</id>
        <label>SFT2D2</label>
    </interactant>
    <organismsDiffer>false</organismsDiffer>
    <experiments>3</experiments>
</comment>
<comment type="interaction">
    <interactant intactId="EBI-1211440">
        <id>P27105</id>
    </interactant>
    <interactant intactId="EBI-355861">
        <id>Q9H9B4</id>
        <label>SFXN1</label>
    </interactant>
    <organismsDiffer>false</organismsDiffer>
    <experiments>3</experiments>
</comment>
<comment type="interaction">
    <interactant intactId="EBI-1211440">
        <id>P27105</id>
    </interactant>
    <interactant intactId="EBI-17274136">
        <id>Q8TD22</id>
        <label>SFXN5</label>
    </interactant>
    <organismsDiffer>false</organismsDiffer>
    <experiments>3</experiments>
</comment>
<comment type="interaction">
    <interactant intactId="EBI-1211440">
        <id>P27105</id>
    </interactant>
    <interactant intactId="EBI-10281213">
        <id>Q969S0</id>
        <label>SLC35B4</label>
    </interactant>
    <organismsDiffer>false</organismsDiffer>
    <experiments>3</experiments>
</comment>
<comment type="interaction">
    <interactant intactId="EBI-1211440">
        <id>P27105</id>
    </interactant>
    <interactant intactId="EBI-7576138">
        <id>P02730</id>
        <label>SLC4A1</label>
    </interactant>
    <organismsDiffer>false</organismsDiffer>
    <experiments>14</experiments>
</comment>
<comment type="interaction">
    <interactant intactId="EBI-1211440">
        <id>P27105</id>
    </interactant>
    <interactant intactId="EBI-8640191">
        <id>Q9NRQ5</id>
        <label>SMCO4</label>
    </interactant>
    <organismsDiffer>false</organismsDiffer>
    <experiments>3</experiments>
</comment>
<comment type="interaction">
    <interactant intactId="EBI-1211440">
        <id>P27105</id>
    </interactant>
    <interactant intactId="EBI-1211440">
        <id>P27105</id>
        <label>STOM</label>
    </interactant>
    <organismsDiffer>false</organismsDiffer>
    <experiments>3</experiments>
</comment>
<comment type="interaction">
    <interactant intactId="EBI-1211440">
        <id>P27105</id>
    </interactant>
    <interactant intactId="EBI-2681162">
        <id>Q9UBI4</id>
        <label>STOML1</label>
    </interactant>
    <organismsDiffer>false</organismsDiffer>
    <experiments>4</experiments>
</comment>
<comment type="interaction">
    <interactant intactId="EBI-1211440">
        <id>P27105</id>
    </interactant>
    <interactant intactId="EBI-2695795">
        <id>O43752</id>
        <label>STX6</label>
    </interactant>
    <organismsDiffer>false</organismsDiffer>
    <experiments>3</experiments>
</comment>
<comment type="interaction">
    <interactant intactId="EBI-1211440">
        <id>P27105</id>
    </interactant>
    <interactant intactId="EBI-2877718">
        <id>Q9NZ01</id>
        <label>TECR</label>
    </interactant>
    <organismsDiffer>false</organismsDiffer>
    <experiments>3</experiments>
</comment>
<comment type="interaction">
    <interactant intactId="EBI-1211440">
        <id>P27105</id>
    </interactant>
    <interactant intactId="EBI-311394">
        <id>Q9C0I4</id>
        <label>THSD7B</label>
    </interactant>
    <organismsDiffer>false</organismsDiffer>
    <experiments>3</experiments>
</comment>
<comment type="interaction">
    <interactant intactId="EBI-1211440">
        <id>P27105</id>
    </interactant>
    <interactant intactId="EBI-1057733">
        <id>Q9BVC6</id>
        <label>TMEM109</label>
    </interactant>
    <organismsDiffer>false</organismsDiffer>
    <experiments>3</experiments>
</comment>
<comment type="interaction">
    <interactant intactId="EBI-1211440">
        <id>P27105</id>
    </interactant>
    <interactant intactId="EBI-10171534">
        <id>A0PK00</id>
        <label>TMEM120B</label>
    </interactant>
    <organismsDiffer>false</organismsDiffer>
    <experiments>3</experiments>
</comment>
<comment type="interaction">
    <interactant intactId="EBI-1211440">
        <id>P27105</id>
    </interactant>
    <interactant intactId="EBI-2844246">
        <id>Q9NV12</id>
        <label>TMEM140</label>
    </interactant>
    <organismsDiffer>false</organismsDiffer>
    <experiments>3</experiments>
</comment>
<comment type="interaction">
    <interactant intactId="EBI-1211440">
        <id>P27105</id>
    </interactant>
    <interactant intactId="EBI-8638294">
        <id>Q9NUH8</id>
        <label>TMEM14B</label>
    </interactant>
    <organismsDiffer>false</organismsDiffer>
    <experiments>3</experiments>
</comment>
<comment type="interaction">
    <interactant intactId="EBI-1211440">
        <id>P27105</id>
    </interactant>
    <interactant intactId="EBI-12274070">
        <id>Q969S6</id>
        <label>TMEM203</label>
    </interactant>
    <organismsDiffer>false</organismsDiffer>
    <experiments>3</experiments>
</comment>
<comment type="interaction">
    <interactant intactId="EBI-1211440">
        <id>P27105</id>
    </interactant>
    <interactant intactId="EBI-12876824">
        <id>Q9BTX3</id>
        <label>TMEM208</label>
    </interactant>
    <organismsDiffer>false</organismsDiffer>
    <experiments>3</experiments>
</comment>
<comment type="interaction">
    <interactant intactId="EBI-1211440">
        <id>P27105</id>
    </interactant>
    <interactant intactId="EBI-11956809">
        <id>Q8TBM7</id>
        <label>TMEM254</label>
    </interactant>
    <organismsDiffer>false</organismsDiffer>
    <experiments>3</experiments>
</comment>
<comment type="interaction">
    <interactant intactId="EBI-1211440">
        <id>P27105</id>
    </interactant>
    <interactant intactId="EBI-2852148">
        <id>Q9H2L4</id>
        <label>TMEM60</label>
    </interactant>
    <organismsDiffer>false</organismsDiffer>
    <experiments>3</experiments>
</comment>
<comment type="interaction">
    <interactant intactId="EBI-1211440">
        <id>P27105</id>
    </interactant>
    <interactant intactId="EBI-2548832">
        <id>Q8N661</id>
        <label>TMEM86B</label>
    </interactant>
    <organismsDiffer>false</organismsDiffer>
    <experiments>3</experiments>
</comment>
<comment type="interaction">
    <interactant intactId="EBI-1211440">
        <id>P27105</id>
    </interactant>
    <interactant intactId="EBI-7333781">
        <id>Q9Y2Y6</id>
        <label>TMEM98</label>
    </interactant>
    <organismsDiffer>false</organismsDiffer>
    <experiments>3</experiments>
</comment>
<comment type="interaction">
    <interactant intactId="EBI-1211440">
        <id>P27105</id>
    </interactant>
    <interactant intactId="EBI-455283">
        <id>P42167</id>
        <label>TMPO</label>
    </interactant>
    <organismsDiffer>false</organismsDiffer>
    <experiments>3</experiments>
</comment>
<comment type="interaction">
    <interactant intactId="EBI-1211440">
        <id>P27105</id>
    </interactant>
    <interactant intactId="EBI-359977">
        <id>P01375</id>
        <label>TNF</label>
    </interactant>
    <organismsDiffer>false</organismsDiffer>
    <experiments>3</experiments>
</comment>
<comment type="interaction">
    <interactant intactId="EBI-1211440">
        <id>P27105</id>
    </interactant>
    <interactant intactId="EBI-717441">
        <id>O14798</id>
        <label>TNFRSF10C</label>
    </interactant>
    <organismsDiffer>false</organismsDiffer>
    <experiments>3</experiments>
</comment>
<comment type="interaction">
    <interactant intactId="EBI-1211440">
        <id>P27105</id>
    </interactant>
    <interactant intactId="EBI-12195249">
        <id>Q5TGU0</id>
        <label>TSPO2</label>
    </interactant>
    <organismsDiffer>false</organismsDiffer>
    <experiments>3</experiments>
</comment>
<comment type="interaction">
    <interactant intactId="EBI-1211440">
        <id>P27105</id>
    </interactant>
    <interactant intactId="EBI-10243654">
        <id>Q5BVD1</id>
        <label>TTMP</label>
    </interactant>
    <organismsDiffer>false</organismsDiffer>
    <experiments>3</experiments>
</comment>
<comment type="interaction">
    <interactant intactId="EBI-1211440">
        <id>P27105</id>
    </interactant>
    <interactant intactId="EBI-744953">
        <id>O75379</id>
        <label>VAMP4</label>
    </interactant>
    <organismsDiffer>false</organismsDiffer>
    <experiments>3</experiments>
</comment>
<comment type="interaction">
    <interactant intactId="EBI-1211440">
        <id>P27105</id>
    </interactant>
    <interactant intactId="EBI-723529">
        <id>Q14508</id>
        <label>WFDC2</label>
    </interactant>
    <organismsDiffer>false</organismsDiffer>
    <experiments>3</experiments>
</comment>
<comment type="interaction">
    <interactant intactId="EBI-1211440">
        <id>P27105</id>
    </interactant>
    <interactant intactId="EBI-751210">
        <id>Q96EC8</id>
        <label>YIPF6</label>
    </interactant>
    <organismsDiffer>false</organismsDiffer>
    <experiments>3</experiments>
</comment>
<comment type="interaction">
    <interactant intactId="EBI-1211440">
        <id>P27105</id>
    </interactant>
    <interactant intactId="EBI-9005440">
        <id>PRO_0000037552</id>
        <dbReference type="UniProtKB" id="Q9WMX2"/>
    </interactant>
    <organismsDiffer>true</organismsDiffer>
    <experiments>3</experiments>
</comment>
<comment type="subcellular location">
    <subcellularLocation>
        <location evidence="14">Cell membrane</location>
        <topology evidence="14">Peripheral membrane protein</topology>
        <orientation evidence="14">Cytoplasmic side</orientation>
    </subcellularLocation>
    <subcellularLocation>
        <location evidence="14">Cytoplasm</location>
        <location evidence="14">Cytoskeleton</location>
    </subcellularLocation>
    <subcellularLocation>
        <location evidence="5">Cell membrane</location>
        <topology evidence="5">Lipid-anchor</topology>
        <orientation evidence="5">Cytoplasmic side</orientation>
    </subcellularLocation>
    <subcellularLocation>
        <location evidence="5 11">Membrane raft</location>
    </subcellularLocation>
    <subcellularLocation>
        <location evidence="6 9">Melanosome</location>
    </subcellularLocation>
    <subcellularLocation>
        <location evidence="1">Cytoplasmic vesicle</location>
    </subcellularLocation>
    <text evidence="5 6 14">Localizes to juxtanuclear structure probably derived from the Golgi apparatus (PubMed:9243190). Colocalizes with cortical actin microfilaments at small plasma membrane protrusions (PubMed:9243190). Associates with alpha-granular lipid rafts (PubMed:12130500). Translocates from the alpha-granular lipid rafts to the cell membrane on thrombin activation and selectively enriched in released microvesicles (PubMed:12130500). Identified by mass spectrometry in melanosome fractions from stage I to stage IV (PubMed:12643545).</text>
</comment>
<comment type="alternative products">
    <event type="alternative splicing"/>
    <isoform>
        <id>P27105-1</id>
        <name>1</name>
        <sequence type="displayed"/>
    </isoform>
    <isoform>
        <id>P27105-2</id>
        <name>2</name>
        <sequence type="described" ref="VSP_044669"/>
    </isoform>
</comment>
<comment type="tissue specificity">
    <text evidence="7 11">Detected in erythrocytes (at protein level). Widely expressed.</text>
</comment>
<comment type="similarity">
    <text evidence="20">Belongs to the band 7/mec-2 family.</text>
</comment>
<name>STOM_HUMAN</name>
<protein>
    <recommendedName>
        <fullName evidence="21">Stomatin</fullName>
    </recommendedName>
    <alternativeName>
        <fullName evidence="18">Erythrocyte band 7 integral membrane protein</fullName>
    </alternativeName>
    <alternativeName>
        <fullName evidence="21">Erythrocyte membrane protein band 7.2</fullName>
    </alternativeName>
    <alternativeName>
        <fullName evidence="19">Protein 7.2b</fullName>
    </alternativeName>
</protein>
<accession>P27105</accession>
<accession>B1AM77</accession>
<accession>Q14087</accession>
<accession>Q15609</accession>
<accession>Q5VX96</accession>
<accession>Q96FK4</accession>
<evidence type="ECO:0000250" key="1">
    <source>
        <dbReference type="UniProtKB" id="P54116"/>
    </source>
</evidence>
<evidence type="ECO:0000255" key="2"/>
<evidence type="ECO:0000256" key="3">
    <source>
        <dbReference type="SAM" id="MobiDB-lite"/>
    </source>
</evidence>
<evidence type="ECO:0000269" key="4">
    <source>
    </source>
</evidence>
<evidence type="ECO:0000269" key="5">
    <source>
    </source>
</evidence>
<evidence type="ECO:0000269" key="6">
    <source>
    </source>
</evidence>
<evidence type="ECO:0000269" key="7">
    <source>
    </source>
</evidence>
<evidence type="ECO:0000269" key="8">
    <source>
    </source>
</evidence>
<evidence type="ECO:0000269" key="9">
    <source>
    </source>
</evidence>
<evidence type="ECO:0000269" key="10">
    <source>
    </source>
</evidence>
<evidence type="ECO:0000269" key="11">
    <source>
    </source>
</evidence>
<evidence type="ECO:0000269" key="12">
    <source>
    </source>
</evidence>
<evidence type="ECO:0000269" key="13">
    <source>
    </source>
</evidence>
<evidence type="ECO:0000269" key="14">
    <source>
    </source>
</evidence>
<evidence type="ECO:0000269" key="15">
    <source>
    </source>
</evidence>
<evidence type="ECO:0000269" key="16">
    <source>
    </source>
</evidence>
<evidence type="ECO:0000303" key="17">
    <source>
    </source>
</evidence>
<evidence type="ECO:0000303" key="18">
    <source>
    </source>
</evidence>
<evidence type="ECO:0000303" key="19">
    <source>
    </source>
</evidence>
<evidence type="ECO:0000305" key="20"/>
<evidence type="ECO:0000312" key="21">
    <source>
        <dbReference type="HGNC" id="HGNC:3383"/>
    </source>
</evidence>
<evidence type="ECO:0007744" key="22">
    <source>
    </source>
</evidence>
<evidence type="ECO:0007744" key="23">
    <source>
    </source>
</evidence>
<evidence type="ECO:0007744" key="24">
    <source>
    </source>
</evidence>
<evidence type="ECO:0007829" key="25">
    <source>
        <dbReference type="PDB" id="7WH3"/>
    </source>
</evidence>
<organism>
    <name type="scientific">Homo sapiens</name>
    <name type="common">Human</name>
    <dbReference type="NCBI Taxonomy" id="9606"/>
    <lineage>
        <taxon>Eukaryota</taxon>
        <taxon>Metazoa</taxon>
        <taxon>Chordata</taxon>
        <taxon>Craniata</taxon>
        <taxon>Vertebrata</taxon>
        <taxon>Euteleostomi</taxon>
        <taxon>Mammalia</taxon>
        <taxon>Eutheria</taxon>
        <taxon>Euarchontoglires</taxon>
        <taxon>Primates</taxon>
        <taxon>Haplorrhini</taxon>
        <taxon>Catarrhini</taxon>
        <taxon>Hominidae</taxon>
        <taxon>Homo</taxon>
    </lineage>
</organism>
<keyword id="KW-0002">3D-structure</keyword>
<keyword id="KW-0025">Alternative splicing</keyword>
<keyword id="KW-1003">Cell membrane</keyword>
<keyword id="KW-0963">Cytoplasm</keyword>
<keyword id="KW-0968">Cytoplasmic vesicle</keyword>
<keyword id="KW-0206">Cytoskeleton</keyword>
<keyword id="KW-0903">Direct protein sequencing</keyword>
<keyword id="KW-0449">Lipoprotein</keyword>
<keyword id="KW-0472">Membrane</keyword>
<keyword id="KW-0564">Palmitate</keyword>
<keyword id="KW-0597">Phosphoprotein</keyword>
<keyword id="KW-1267">Proteomics identification</keyword>
<keyword id="KW-1185">Reference proteome</keyword>
<dbReference type="EMBL" id="X60067">
    <property type="protein sequence ID" value="CAA42671.1"/>
    <property type="molecule type" value="mRNA"/>
</dbReference>
<dbReference type="EMBL" id="M81635">
    <property type="protein sequence ID" value="AAA58432.1"/>
    <property type="molecule type" value="mRNA"/>
</dbReference>
<dbReference type="EMBL" id="X85116">
    <property type="protein sequence ID" value="CAA59436.1"/>
    <property type="molecule type" value="Genomic_DNA"/>
</dbReference>
<dbReference type="EMBL" id="X85117">
    <property type="protein sequence ID" value="CAA59436.1"/>
    <property type="status" value="JOINED"/>
    <property type="molecule type" value="Genomic_DNA"/>
</dbReference>
<dbReference type="EMBL" id="U33931">
    <property type="protein sequence ID" value="AAC50296.1"/>
    <property type="status" value="ALT_SEQ"/>
    <property type="molecule type" value="Genomic_DNA"/>
</dbReference>
<dbReference type="EMBL" id="U33925">
    <property type="protein sequence ID" value="AAC50296.1"/>
    <property type="status" value="JOINED"/>
    <property type="molecule type" value="Genomic_DNA"/>
</dbReference>
<dbReference type="EMBL" id="U33926">
    <property type="protein sequence ID" value="AAC50296.1"/>
    <property type="status" value="JOINED"/>
    <property type="molecule type" value="Genomic_DNA"/>
</dbReference>
<dbReference type="EMBL" id="U33927">
    <property type="protein sequence ID" value="AAC50296.1"/>
    <property type="status" value="JOINED"/>
    <property type="molecule type" value="Genomic_DNA"/>
</dbReference>
<dbReference type="EMBL" id="U33928">
    <property type="protein sequence ID" value="AAC50296.1"/>
    <property type="status" value="JOINED"/>
    <property type="molecule type" value="Genomic_DNA"/>
</dbReference>
<dbReference type="EMBL" id="U33929">
    <property type="protein sequence ID" value="AAC50296.1"/>
    <property type="status" value="JOINED"/>
    <property type="molecule type" value="Genomic_DNA"/>
</dbReference>
<dbReference type="EMBL" id="U33930">
    <property type="protein sequence ID" value="AAC50296.1"/>
    <property type="status" value="JOINED"/>
    <property type="molecule type" value="Genomic_DNA"/>
</dbReference>
<dbReference type="EMBL" id="CR542100">
    <property type="protein sequence ID" value="CAG46897.1"/>
    <property type="molecule type" value="mRNA"/>
</dbReference>
<dbReference type="EMBL" id="AL359644">
    <property type="status" value="NOT_ANNOTATED_CDS"/>
    <property type="molecule type" value="Genomic_DNA"/>
</dbReference>
<dbReference type="EMBL" id="AL161784">
    <property type="status" value="NOT_ANNOTATED_CDS"/>
    <property type="molecule type" value="Genomic_DNA"/>
</dbReference>
<dbReference type="EMBL" id="BC010703">
    <property type="protein sequence ID" value="AAH10703.1"/>
    <property type="molecule type" value="mRNA"/>
</dbReference>
<dbReference type="EMBL" id="BI603242">
    <property type="status" value="NOT_ANNOTATED_CDS"/>
    <property type="molecule type" value="mRNA"/>
</dbReference>
<dbReference type="CCDS" id="CCDS6830.1">
    <molecule id="P27105-1"/>
</dbReference>
<dbReference type="CCDS" id="CCDS6831.1">
    <molecule id="P27105-2"/>
</dbReference>
<dbReference type="PIR" id="S17659">
    <property type="entry name" value="S17659"/>
</dbReference>
<dbReference type="RefSeq" id="NP_004090.4">
    <molecule id="P27105-1"/>
    <property type="nucleotide sequence ID" value="NM_004099.5"/>
</dbReference>
<dbReference type="RefSeq" id="NP_937837.1">
    <molecule id="P27105-2"/>
    <property type="nucleotide sequence ID" value="NM_198194.3"/>
</dbReference>
<dbReference type="PDB" id="7WH3">
    <property type="method" value="NMR"/>
    <property type="chains" value="A=94-202"/>
</dbReference>
<dbReference type="PDBsum" id="7WH3"/>
<dbReference type="BMRB" id="P27105"/>
<dbReference type="SMR" id="P27105"/>
<dbReference type="BioGRID" id="108354">
    <property type="interactions" value="374"/>
</dbReference>
<dbReference type="CORUM" id="P27105"/>
<dbReference type="FunCoup" id="P27105">
    <property type="interactions" value="669"/>
</dbReference>
<dbReference type="IntAct" id="P27105">
    <property type="interactions" value="209"/>
</dbReference>
<dbReference type="MINT" id="P27105"/>
<dbReference type="STRING" id="9606.ENSP00000286713"/>
<dbReference type="TCDB" id="8.A.21.1.1">
    <property type="family name" value="the stomatin/podocin/band 7/nephrosis,2/spfh (stomatin) family"/>
</dbReference>
<dbReference type="GlyGen" id="P27105">
    <property type="glycosylation" value="5 sites, 3 N-linked glycans (4 sites), 1 O-linked glycan (1 site)"/>
</dbReference>
<dbReference type="iPTMnet" id="P27105"/>
<dbReference type="MetOSite" id="P27105"/>
<dbReference type="PhosphoSitePlus" id="P27105"/>
<dbReference type="SwissPalm" id="P27105"/>
<dbReference type="BioMuta" id="STOM"/>
<dbReference type="DMDM" id="114823"/>
<dbReference type="CPTAC" id="CPTAC-276"/>
<dbReference type="CPTAC" id="CPTAC-277"/>
<dbReference type="jPOST" id="P27105"/>
<dbReference type="MassIVE" id="P27105"/>
<dbReference type="PaxDb" id="9606-ENSP00000286713"/>
<dbReference type="PeptideAtlas" id="P27105"/>
<dbReference type="PRIDE" id="P27105"/>
<dbReference type="ProteomicsDB" id="3187"/>
<dbReference type="ProteomicsDB" id="54374">
    <molecule id="P27105-1"/>
</dbReference>
<dbReference type="Pumba" id="P27105"/>
<dbReference type="Antibodypedia" id="2509">
    <property type="antibodies" value="262 antibodies from 33 providers"/>
</dbReference>
<dbReference type="DNASU" id="2040"/>
<dbReference type="Ensembl" id="ENST00000286713.7">
    <molecule id="P27105-1"/>
    <property type="protein sequence ID" value="ENSP00000286713.2"/>
    <property type="gene ID" value="ENSG00000148175.13"/>
</dbReference>
<dbReference type="Ensembl" id="ENST00000347359.3">
    <molecule id="P27105-2"/>
    <property type="protein sequence ID" value="ENSP00000339607.2"/>
    <property type="gene ID" value="ENSG00000148175.13"/>
</dbReference>
<dbReference type="GeneID" id="2040"/>
<dbReference type="KEGG" id="hsa:2040"/>
<dbReference type="MANE-Select" id="ENST00000286713.7">
    <property type="protein sequence ID" value="ENSP00000286713.2"/>
    <property type="RefSeq nucleotide sequence ID" value="NM_004099.6"/>
    <property type="RefSeq protein sequence ID" value="NP_004090.4"/>
</dbReference>
<dbReference type="UCSC" id="uc004blh.5">
    <molecule id="P27105-1"/>
    <property type="organism name" value="human"/>
</dbReference>
<dbReference type="AGR" id="HGNC:3383"/>
<dbReference type="CTD" id="2040"/>
<dbReference type="DisGeNET" id="2040"/>
<dbReference type="GeneCards" id="STOM"/>
<dbReference type="HGNC" id="HGNC:3383">
    <property type="gene designation" value="STOM"/>
</dbReference>
<dbReference type="HPA" id="ENSG00000148175">
    <property type="expression patterns" value="Low tissue specificity"/>
</dbReference>
<dbReference type="MIM" id="133090">
    <property type="type" value="gene"/>
</dbReference>
<dbReference type="neXtProt" id="NX_P27105"/>
<dbReference type="OpenTargets" id="ENSG00000148175"/>
<dbReference type="PharmGKB" id="PA27816"/>
<dbReference type="VEuPathDB" id="HostDB:ENSG00000148175"/>
<dbReference type="eggNOG" id="KOG2621">
    <property type="taxonomic scope" value="Eukaryota"/>
</dbReference>
<dbReference type="GeneTree" id="ENSGT01030000234614"/>
<dbReference type="HOGENOM" id="CLU_024949_3_0_1"/>
<dbReference type="InParanoid" id="P27105"/>
<dbReference type="OMA" id="MFQVTDP"/>
<dbReference type="OrthoDB" id="2105077at2759"/>
<dbReference type="PAN-GO" id="P27105">
    <property type="GO annotations" value="1 GO annotation based on evolutionary models"/>
</dbReference>
<dbReference type="PhylomeDB" id="P27105"/>
<dbReference type="TreeFam" id="TF105750"/>
<dbReference type="PathwayCommons" id="P27105"/>
<dbReference type="Reactome" id="R-HSA-2672351">
    <property type="pathway name" value="Stimuli-sensing channels"/>
</dbReference>
<dbReference type="Reactome" id="R-HSA-6798695">
    <property type="pathway name" value="Neutrophil degranulation"/>
</dbReference>
<dbReference type="Reactome" id="R-HSA-8980692">
    <property type="pathway name" value="RHOA GTPase cycle"/>
</dbReference>
<dbReference type="Reactome" id="R-HSA-9013026">
    <property type="pathway name" value="RHOB GTPase cycle"/>
</dbReference>
<dbReference type="Reactome" id="R-HSA-9013106">
    <property type="pathway name" value="RHOC GTPase cycle"/>
</dbReference>
<dbReference type="Reactome" id="R-HSA-9013148">
    <property type="pathway name" value="CDC42 GTPase cycle"/>
</dbReference>
<dbReference type="Reactome" id="R-HSA-9013406">
    <property type="pathway name" value="RHOQ GTPase cycle"/>
</dbReference>
<dbReference type="Reactome" id="R-HSA-9013407">
    <property type="pathway name" value="RHOH GTPase cycle"/>
</dbReference>
<dbReference type="Reactome" id="R-HSA-9013409">
    <property type="pathway name" value="RHOJ GTPase cycle"/>
</dbReference>
<dbReference type="SignaLink" id="P27105"/>
<dbReference type="SIGNOR" id="P27105"/>
<dbReference type="BioGRID-ORCS" id="2040">
    <property type="hits" value="13 hits in 1159 CRISPR screens"/>
</dbReference>
<dbReference type="CD-CODE" id="FB4E32DD">
    <property type="entry name" value="Presynaptic clusters and postsynaptic densities"/>
</dbReference>
<dbReference type="ChiTaRS" id="STOM">
    <property type="organism name" value="human"/>
</dbReference>
<dbReference type="GeneWiki" id="Stomatin"/>
<dbReference type="GenomeRNAi" id="2040"/>
<dbReference type="Pharos" id="P27105">
    <property type="development level" value="Tbio"/>
</dbReference>
<dbReference type="PRO" id="PR:P27105"/>
<dbReference type="Proteomes" id="UP000005640">
    <property type="component" value="Chromosome 9"/>
</dbReference>
<dbReference type="RNAct" id="P27105">
    <property type="molecule type" value="protein"/>
</dbReference>
<dbReference type="Bgee" id="ENSG00000148175">
    <property type="expression patterns" value="Expressed in visceral pleura and 218 other cell types or tissues"/>
</dbReference>
<dbReference type="ExpressionAtlas" id="P27105">
    <property type="expression patterns" value="baseline and differential"/>
</dbReference>
<dbReference type="GO" id="GO:0035577">
    <property type="term" value="C:azurophil granule membrane"/>
    <property type="evidence" value="ECO:0000304"/>
    <property type="project" value="Reactome"/>
</dbReference>
<dbReference type="GO" id="GO:0072562">
    <property type="term" value="C:blood microparticle"/>
    <property type="evidence" value="ECO:0007005"/>
    <property type="project" value="UniProtKB"/>
</dbReference>
<dbReference type="GO" id="GO:0005856">
    <property type="term" value="C:cytoskeleton"/>
    <property type="evidence" value="ECO:0000314"/>
    <property type="project" value="UniProtKB"/>
</dbReference>
<dbReference type="GO" id="GO:0005829">
    <property type="term" value="C:cytosol"/>
    <property type="evidence" value="ECO:0000314"/>
    <property type="project" value="HPA"/>
</dbReference>
<dbReference type="GO" id="GO:0005783">
    <property type="term" value="C:endoplasmic reticulum"/>
    <property type="evidence" value="ECO:0000314"/>
    <property type="project" value="AgBase"/>
</dbReference>
<dbReference type="GO" id="GO:0070062">
    <property type="term" value="C:extracellular exosome"/>
    <property type="evidence" value="ECO:0007005"/>
    <property type="project" value="UniProtKB"/>
</dbReference>
<dbReference type="GO" id="GO:0005615">
    <property type="term" value="C:extracellular space"/>
    <property type="evidence" value="ECO:0007005"/>
    <property type="project" value="UniProtKB"/>
</dbReference>
<dbReference type="GO" id="GO:0043231">
    <property type="term" value="C:intracellular membrane-bounded organelle"/>
    <property type="evidence" value="ECO:0000314"/>
    <property type="project" value="HPA"/>
</dbReference>
<dbReference type="GO" id="GO:0042470">
    <property type="term" value="C:melanosome"/>
    <property type="evidence" value="ECO:0007669"/>
    <property type="project" value="UniProtKB-SubCell"/>
</dbReference>
<dbReference type="GO" id="GO:0016020">
    <property type="term" value="C:membrane"/>
    <property type="evidence" value="ECO:0007005"/>
    <property type="project" value="UniProtKB"/>
</dbReference>
<dbReference type="GO" id="GO:0045121">
    <property type="term" value="C:membrane raft"/>
    <property type="evidence" value="ECO:0000314"/>
    <property type="project" value="UniProtKB"/>
</dbReference>
<dbReference type="GO" id="GO:0005739">
    <property type="term" value="C:mitochondrion"/>
    <property type="evidence" value="ECO:0000314"/>
    <property type="project" value="AgBase"/>
</dbReference>
<dbReference type="GO" id="GO:0048471">
    <property type="term" value="C:perinuclear region of cytoplasm"/>
    <property type="evidence" value="ECO:0007669"/>
    <property type="project" value="Ensembl"/>
</dbReference>
<dbReference type="GO" id="GO:0005886">
    <property type="term" value="C:plasma membrane"/>
    <property type="evidence" value="ECO:0000314"/>
    <property type="project" value="HPA"/>
</dbReference>
<dbReference type="GO" id="GO:0035579">
    <property type="term" value="C:specific granule membrane"/>
    <property type="evidence" value="ECO:0000304"/>
    <property type="project" value="Reactome"/>
</dbReference>
<dbReference type="GO" id="GO:0070821">
    <property type="term" value="C:tertiary granule membrane"/>
    <property type="evidence" value="ECO:0000304"/>
    <property type="project" value="Reactome"/>
</dbReference>
<dbReference type="GO" id="GO:0031982">
    <property type="term" value="C:vesicle"/>
    <property type="evidence" value="ECO:0007005"/>
    <property type="project" value="UniProtKB"/>
</dbReference>
<dbReference type="GO" id="GO:0042802">
    <property type="term" value="F:identical protein binding"/>
    <property type="evidence" value="ECO:0000353"/>
    <property type="project" value="UniProtKB"/>
</dbReference>
<dbReference type="GO" id="GO:0008200">
    <property type="term" value="F:ion channel inhibitor activity"/>
    <property type="evidence" value="ECO:0007669"/>
    <property type="project" value="Ensembl"/>
</dbReference>
<dbReference type="GO" id="GO:0042803">
    <property type="term" value="F:protein homodimerization activity"/>
    <property type="evidence" value="ECO:0007669"/>
    <property type="project" value="Ensembl"/>
</dbReference>
<dbReference type="GO" id="GO:0070063">
    <property type="term" value="F:RNA polymerase binding"/>
    <property type="evidence" value="ECO:0000353"/>
    <property type="project" value="AgBase"/>
</dbReference>
<dbReference type="GO" id="GO:0044829">
    <property type="term" value="P:positive regulation by host of viral genome replication"/>
    <property type="evidence" value="ECO:0007669"/>
    <property type="project" value="Ensembl"/>
</dbReference>
<dbReference type="GO" id="GO:0090314">
    <property type="term" value="P:positive regulation of protein targeting to membrane"/>
    <property type="evidence" value="ECO:0007669"/>
    <property type="project" value="Ensembl"/>
</dbReference>
<dbReference type="GO" id="GO:0048524">
    <property type="term" value="P:positive regulation of viral process"/>
    <property type="evidence" value="ECO:0007669"/>
    <property type="project" value="Ensembl"/>
</dbReference>
<dbReference type="GO" id="GO:0034765">
    <property type="term" value="P:regulation of monoatomic ion transmembrane transport"/>
    <property type="evidence" value="ECO:0007669"/>
    <property type="project" value="Ensembl"/>
</dbReference>
<dbReference type="CDD" id="cd03403">
    <property type="entry name" value="SPFH_stomatin"/>
    <property type="match status" value="1"/>
</dbReference>
<dbReference type="FunFam" id="3.30.479.30:FF:000002">
    <property type="entry name" value="band 7 protein AGAP004871"/>
    <property type="match status" value="1"/>
</dbReference>
<dbReference type="Gene3D" id="6.10.250.2090">
    <property type="match status" value="1"/>
</dbReference>
<dbReference type="Gene3D" id="3.30.479.30">
    <property type="entry name" value="Band 7 domain"/>
    <property type="match status" value="1"/>
</dbReference>
<dbReference type="InterPro" id="IPR043202">
    <property type="entry name" value="Band-7_stomatin-like"/>
</dbReference>
<dbReference type="InterPro" id="IPR001107">
    <property type="entry name" value="Band_7"/>
</dbReference>
<dbReference type="InterPro" id="IPR036013">
    <property type="entry name" value="Band_7/SPFH_dom_sf"/>
</dbReference>
<dbReference type="InterPro" id="IPR018080">
    <property type="entry name" value="Band_7/stomatin-like_CS"/>
</dbReference>
<dbReference type="InterPro" id="IPR001972">
    <property type="entry name" value="Stomatin_HflK_fam"/>
</dbReference>
<dbReference type="PANTHER" id="PTHR10264">
    <property type="entry name" value="BAND 7 PROTEIN-RELATED"/>
    <property type="match status" value="1"/>
</dbReference>
<dbReference type="PANTHER" id="PTHR10264:SF115">
    <property type="entry name" value="STOMATIN"/>
    <property type="match status" value="1"/>
</dbReference>
<dbReference type="Pfam" id="PF01145">
    <property type="entry name" value="Band_7"/>
    <property type="match status" value="1"/>
</dbReference>
<dbReference type="PRINTS" id="PR00721">
    <property type="entry name" value="STOMATIN"/>
</dbReference>
<dbReference type="SMART" id="SM00244">
    <property type="entry name" value="PHB"/>
    <property type="match status" value="1"/>
</dbReference>
<dbReference type="SUPFAM" id="SSF117892">
    <property type="entry name" value="Band 7/SPFH domain"/>
    <property type="match status" value="1"/>
</dbReference>
<dbReference type="PROSITE" id="PS01270">
    <property type="entry name" value="BAND_7"/>
    <property type="match status" value="1"/>
</dbReference>